<name>HDHA_ECO57</name>
<protein>
    <recommendedName>
        <fullName evidence="1">7alpha-hydroxysteroid dehydrogenase</fullName>
        <shortName evidence="1">7alpha-HSDH</shortName>
        <ecNumber evidence="1">1.1.1.159</ecNumber>
    </recommendedName>
    <alternativeName>
        <fullName evidence="1">NAD-dependent 7alpha-hydroxysteroid dehydrogenase</fullName>
    </alternativeName>
</protein>
<sequence>MFNSDNLRLDGKCAIITGAGAGIGKEIAITFATAGASVVVSDINADAANHVVDEIQQLGGQAFACRCDITSEQELSALADFAISKLGKVDILVNNAGGGGPKPFDMPMADFRRAYELNVFSFFHLSQLVAPEMEKNGGGVILTITSMAAENKNINMTSYASSKAAASHLVRNMAFDLGEKNIRVNGIAPGAILTDALKSVITPEIEQKMLQHTPIRRLGQPQDIANAALFLCSPAASWVSGQILTVSGGGVQELN</sequence>
<gene>
    <name type="primary">hdhA</name>
    <name type="ordered locus">Z2624</name>
    <name type="ordered locus">ECs2327</name>
</gene>
<comment type="function">
    <text evidence="1">7alpha-hydroxysteroid dehydrogenase involved in the metabolism of bile acids. Catalyzes the NAD(+)-dependent oxidation of the 7alpha-hydroxy group of 7alpha-hydroxysteroids, such as the major human bile acids cholate and chenodeoxycholate, to the corresponding 7-oxosteroids. To a lesser extent, can also act on taurochenodeoxycholate, taurocholate and glycocholate. Can also use glycochenodeoxycholate as substrate. Is not able to use NADP(+) instead of NAD(+) as the electron acceptor.</text>
</comment>
<comment type="catalytic activity">
    <reaction evidence="1">
        <text>cholate + NAD(+) = 3alpha,12alpha-dihydroxy-7-oxo-5beta-cholanate + NADH + H(+)</text>
        <dbReference type="Rhea" id="RHEA:19409"/>
        <dbReference type="ChEBI" id="CHEBI:11893"/>
        <dbReference type="ChEBI" id="CHEBI:15378"/>
        <dbReference type="ChEBI" id="CHEBI:29747"/>
        <dbReference type="ChEBI" id="CHEBI:57540"/>
        <dbReference type="ChEBI" id="CHEBI:57945"/>
        <dbReference type="EC" id="1.1.1.159"/>
    </reaction>
    <physiologicalReaction direction="left-to-right" evidence="1">
        <dbReference type="Rhea" id="RHEA:19410"/>
    </physiologicalReaction>
</comment>
<comment type="catalytic activity">
    <reaction evidence="1">
        <text>chenodeoxycholate + NAD(+) = 7-oxolithocholate + NADH + H(+)</text>
        <dbReference type="Rhea" id="RHEA:42036"/>
        <dbReference type="ChEBI" id="CHEBI:15378"/>
        <dbReference type="ChEBI" id="CHEBI:36234"/>
        <dbReference type="ChEBI" id="CHEBI:57540"/>
        <dbReference type="ChEBI" id="CHEBI:57945"/>
        <dbReference type="ChEBI" id="CHEBI:78605"/>
    </reaction>
    <physiologicalReaction direction="left-to-right" evidence="1">
        <dbReference type="Rhea" id="RHEA:42037"/>
    </physiologicalReaction>
</comment>
<comment type="catalytic activity">
    <reaction evidence="1">
        <text>taurochenodeoxycholate + NAD(+) = 7-oxotaurolithocholate + NADH + H(+)</text>
        <dbReference type="Rhea" id="RHEA:53824"/>
        <dbReference type="ChEBI" id="CHEBI:9407"/>
        <dbReference type="ChEBI" id="CHEBI:15378"/>
        <dbReference type="ChEBI" id="CHEBI:57540"/>
        <dbReference type="ChEBI" id="CHEBI:57945"/>
        <dbReference type="ChEBI" id="CHEBI:137724"/>
    </reaction>
    <physiologicalReaction direction="left-to-right" evidence="1">
        <dbReference type="Rhea" id="RHEA:53825"/>
    </physiologicalReaction>
</comment>
<comment type="catalytic activity">
    <reaction evidence="1">
        <text>taurocholate + NAD(+) = 7-oxo-taurodeoxycholate + NADH + H(+)</text>
        <dbReference type="Rhea" id="RHEA:53848"/>
        <dbReference type="ChEBI" id="CHEBI:15378"/>
        <dbReference type="ChEBI" id="CHEBI:36257"/>
        <dbReference type="ChEBI" id="CHEBI:57540"/>
        <dbReference type="ChEBI" id="CHEBI:57945"/>
        <dbReference type="ChEBI" id="CHEBI:137820"/>
    </reaction>
    <physiologicalReaction direction="left-to-right" evidence="1">
        <dbReference type="Rhea" id="RHEA:53849"/>
    </physiologicalReaction>
</comment>
<comment type="catalytic activity">
    <reaction evidence="1">
        <text>glycocholate + NAD(+) = 7-oxo-glycodeoxycholate + NADH + H(+)</text>
        <dbReference type="Rhea" id="RHEA:53852"/>
        <dbReference type="ChEBI" id="CHEBI:15378"/>
        <dbReference type="ChEBI" id="CHEBI:29746"/>
        <dbReference type="ChEBI" id="CHEBI:57540"/>
        <dbReference type="ChEBI" id="CHEBI:57945"/>
        <dbReference type="ChEBI" id="CHEBI:137824"/>
    </reaction>
    <physiologicalReaction direction="left-to-right" evidence="1">
        <dbReference type="Rhea" id="RHEA:53853"/>
    </physiologicalReaction>
</comment>
<comment type="catalytic activity">
    <reaction evidence="1">
        <text>glycochenodeoxycholate + NAD(+) = 7-oxoglycolithocholate + NADH + H(+)</text>
        <dbReference type="Rhea" id="RHEA:53844"/>
        <dbReference type="ChEBI" id="CHEBI:15378"/>
        <dbReference type="ChEBI" id="CHEBI:36252"/>
        <dbReference type="ChEBI" id="CHEBI:57540"/>
        <dbReference type="ChEBI" id="CHEBI:57945"/>
        <dbReference type="ChEBI" id="CHEBI:137818"/>
    </reaction>
    <physiologicalReaction direction="left-to-right" evidence="1">
        <dbReference type="Rhea" id="RHEA:53845"/>
    </physiologicalReaction>
</comment>
<comment type="subunit">
    <text evidence="1">Homotetramer.</text>
</comment>
<comment type="similarity">
    <text evidence="1">Belongs to the short-chain dehydrogenases/reductases (SDR) family.</text>
</comment>
<reference key="1">
    <citation type="journal article" date="2001" name="Nature">
        <title>Genome sequence of enterohaemorrhagic Escherichia coli O157:H7.</title>
        <authorList>
            <person name="Perna N.T."/>
            <person name="Plunkett G. III"/>
            <person name="Burland V."/>
            <person name="Mau B."/>
            <person name="Glasner J.D."/>
            <person name="Rose D.J."/>
            <person name="Mayhew G.F."/>
            <person name="Evans P.S."/>
            <person name="Gregor J."/>
            <person name="Kirkpatrick H.A."/>
            <person name="Posfai G."/>
            <person name="Hackett J."/>
            <person name="Klink S."/>
            <person name="Boutin A."/>
            <person name="Shao Y."/>
            <person name="Miller L."/>
            <person name="Grotbeck E.J."/>
            <person name="Davis N.W."/>
            <person name="Lim A."/>
            <person name="Dimalanta E.T."/>
            <person name="Potamousis K."/>
            <person name="Apodaca J."/>
            <person name="Anantharaman T.S."/>
            <person name="Lin J."/>
            <person name="Yen G."/>
            <person name="Schwartz D.C."/>
            <person name="Welch R.A."/>
            <person name="Blattner F.R."/>
        </authorList>
    </citation>
    <scope>NUCLEOTIDE SEQUENCE [LARGE SCALE GENOMIC DNA]</scope>
    <source>
        <strain>O157:H7 / EDL933 / ATCC 700927 / EHEC</strain>
    </source>
</reference>
<reference key="2">
    <citation type="journal article" date="2001" name="DNA Res.">
        <title>Complete genome sequence of enterohemorrhagic Escherichia coli O157:H7 and genomic comparison with a laboratory strain K-12.</title>
        <authorList>
            <person name="Hayashi T."/>
            <person name="Makino K."/>
            <person name="Ohnishi M."/>
            <person name="Kurokawa K."/>
            <person name="Ishii K."/>
            <person name="Yokoyama K."/>
            <person name="Han C.-G."/>
            <person name="Ohtsubo E."/>
            <person name="Nakayama K."/>
            <person name="Murata T."/>
            <person name="Tanaka M."/>
            <person name="Tobe T."/>
            <person name="Iida T."/>
            <person name="Takami H."/>
            <person name="Honda T."/>
            <person name="Sasakawa C."/>
            <person name="Ogasawara N."/>
            <person name="Yasunaga T."/>
            <person name="Kuhara S."/>
            <person name="Shiba T."/>
            <person name="Hattori M."/>
            <person name="Shinagawa H."/>
        </authorList>
    </citation>
    <scope>NUCLEOTIDE SEQUENCE [LARGE SCALE GENOMIC DNA]</scope>
    <source>
        <strain>O157:H7 / Sakai / RIMD 0509952 / EHEC</strain>
    </source>
</reference>
<evidence type="ECO:0000250" key="1">
    <source>
        <dbReference type="UniProtKB" id="P0AET8"/>
    </source>
</evidence>
<feature type="chain" id="PRO_0000054709" description="7alpha-hydroxysteroid dehydrogenase">
    <location>
        <begin position="1"/>
        <end position="255"/>
    </location>
</feature>
<feature type="active site" description="Proton acceptor" evidence="1">
    <location>
        <position position="159"/>
    </location>
</feature>
<feature type="binding site" evidence="1">
    <location>
        <position position="23"/>
    </location>
    <ligand>
        <name>NAD(+)</name>
        <dbReference type="ChEBI" id="CHEBI:57540"/>
    </ligand>
</feature>
<feature type="binding site" evidence="1">
    <location>
        <begin position="42"/>
        <end position="43"/>
    </location>
    <ligand>
        <name>NAD(+)</name>
        <dbReference type="ChEBI" id="CHEBI:57540"/>
    </ligand>
</feature>
<feature type="binding site" evidence="1">
    <location>
        <begin position="68"/>
        <end position="69"/>
    </location>
    <ligand>
        <name>NAD(+)</name>
        <dbReference type="ChEBI" id="CHEBI:57540"/>
    </ligand>
</feature>
<feature type="binding site" evidence="1">
    <location>
        <position position="95"/>
    </location>
    <ligand>
        <name>NAD(+)</name>
        <dbReference type="ChEBI" id="CHEBI:57540"/>
    </ligand>
</feature>
<feature type="binding site" evidence="1">
    <location>
        <position position="99"/>
    </location>
    <ligand>
        <name>glycochenodeoxycholate</name>
        <dbReference type="ChEBI" id="CHEBI:36252"/>
    </ligand>
</feature>
<feature type="binding site" evidence="1">
    <location>
        <position position="146"/>
    </location>
    <ligand>
        <name>glycochenodeoxycholate</name>
        <dbReference type="ChEBI" id="CHEBI:36252"/>
    </ligand>
</feature>
<feature type="binding site" evidence="1">
    <location>
        <position position="151"/>
    </location>
    <ligand>
        <name>glycochenodeoxycholate</name>
        <dbReference type="ChEBI" id="CHEBI:36252"/>
    </ligand>
</feature>
<feature type="binding site" evidence="1">
    <location>
        <position position="159"/>
    </location>
    <ligand>
        <name>glycochenodeoxycholate</name>
        <dbReference type="ChEBI" id="CHEBI:36252"/>
    </ligand>
</feature>
<feature type="binding site" evidence="1">
    <location>
        <position position="159"/>
    </location>
    <ligand>
        <name>NAD(+)</name>
        <dbReference type="ChEBI" id="CHEBI:57540"/>
    </ligand>
</feature>
<feature type="binding site" evidence="1">
    <location>
        <position position="163"/>
    </location>
    <ligand>
        <name>NAD(+)</name>
        <dbReference type="ChEBI" id="CHEBI:57540"/>
    </ligand>
</feature>
<feature type="binding site" evidence="1">
    <location>
        <begin position="192"/>
        <end position="194"/>
    </location>
    <ligand>
        <name>NAD(+)</name>
        <dbReference type="ChEBI" id="CHEBI:57540"/>
    </ligand>
</feature>
<feature type="site" description="Transition state stabilizer" evidence="1">
    <location>
        <position position="146"/>
    </location>
</feature>
<feature type="site" description="Lowers pKa of active site Tyr" evidence="1">
    <location>
        <position position="163"/>
    </location>
</feature>
<dbReference type="EC" id="1.1.1.159" evidence="1"/>
<dbReference type="EMBL" id="AE005174">
    <property type="protein sequence ID" value="AAG56608.1"/>
    <property type="molecule type" value="Genomic_DNA"/>
</dbReference>
<dbReference type="EMBL" id="BA000007">
    <property type="protein sequence ID" value="BAB35750.1"/>
    <property type="molecule type" value="Genomic_DNA"/>
</dbReference>
<dbReference type="PIR" id="D85768">
    <property type="entry name" value="D85768"/>
</dbReference>
<dbReference type="PIR" id="G90919">
    <property type="entry name" value="G90919"/>
</dbReference>
<dbReference type="RefSeq" id="NP_310354.1">
    <property type="nucleotide sequence ID" value="NC_002695.1"/>
</dbReference>
<dbReference type="RefSeq" id="WP_000483353.1">
    <property type="nucleotide sequence ID" value="NZ_VOAI01000007.1"/>
</dbReference>
<dbReference type="SMR" id="P0AET9"/>
<dbReference type="STRING" id="155864.Z2624"/>
<dbReference type="GeneID" id="75171679"/>
<dbReference type="GeneID" id="912528"/>
<dbReference type="KEGG" id="ece:Z2624"/>
<dbReference type="KEGG" id="ecs:ECs_2327"/>
<dbReference type="PATRIC" id="fig|386585.9.peg.2437"/>
<dbReference type="eggNOG" id="COG1028">
    <property type="taxonomic scope" value="Bacteria"/>
</dbReference>
<dbReference type="HOGENOM" id="CLU_010194_1_3_6"/>
<dbReference type="OMA" id="NSLACGP"/>
<dbReference type="Proteomes" id="UP000000558">
    <property type="component" value="Chromosome"/>
</dbReference>
<dbReference type="Proteomes" id="UP000002519">
    <property type="component" value="Chromosome"/>
</dbReference>
<dbReference type="GO" id="GO:0106281">
    <property type="term" value="F:chenodeoxycholate 7-alpha-dehydrogenase (NAD+) activity"/>
    <property type="evidence" value="ECO:0007669"/>
    <property type="project" value="RHEA"/>
</dbReference>
<dbReference type="GO" id="GO:0008709">
    <property type="term" value="F:cholate 7-alpha-dehydrogenase (NAD+) activity"/>
    <property type="evidence" value="ECO:0007669"/>
    <property type="project" value="UniProtKB-EC"/>
</dbReference>
<dbReference type="GO" id="GO:0030573">
    <property type="term" value="P:bile acid catabolic process"/>
    <property type="evidence" value="ECO:0007669"/>
    <property type="project" value="UniProtKB-KW"/>
</dbReference>
<dbReference type="GO" id="GO:0016042">
    <property type="term" value="P:lipid catabolic process"/>
    <property type="evidence" value="ECO:0007669"/>
    <property type="project" value="UniProtKB-KW"/>
</dbReference>
<dbReference type="CDD" id="cd05365">
    <property type="entry name" value="7_alpha_HSDH_SDR_c"/>
    <property type="match status" value="1"/>
</dbReference>
<dbReference type="FunFam" id="3.40.50.720:FF:000279">
    <property type="entry name" value="7-alpha-hydroxysteroid dehydrogenase"/>
    <property type="match status" value="1"/>
</dbReference>
<dbReference type="Gene3D" id="3.40.50.720">
    <property type="entry name" value="NAD(P)-binding Rossmann-like Domain"/>
    <property type="match status" value="1"/>
</dbReference>
<dbReference type="InterPro" id="IPR036291">
    <property type="entry name" value="NAD(P)-bd_dom_sf"/>
</dbReference>
<dbReference type="InterPro" id="IPR020904">
    <property type="entry name" value="Sc_DH/Rdtase_CS"/>
</dbReference>
<dbReference type="InterPro" id="IPR050259">
    <property type="entry name" value="SDR"/>
</dbReference>
<dbReference type="InterPro" id="IPR002347">
    <property type="entry name" value="SDR_fam"/>
</dbReference>
<dbReference type="NCBIfam" id="NF004773">
    <property type="entry name" value="PRK06113.1"/>
    <property type="match status" value="1"/>
</dbReference>
<dbReference type="NCBIfam" id="NF005559">
    <property type="entry name" value="PRK07231.1"/>
    <property type="match status" value="1"/>
</dbReference>
<dbReference type="PANTHER" id="PTHR42879">
    <property type="entry name" value="3-OXOACYL-(ACYL-CARRIER-PROTEIN) REDUCTASE"/>
    <property type="match status" value="1"/>
</dbReference>
<dbReference type="PANTHER" id="PTHR42879:SF2">
    <property type="entry name" value="3-OXOACYL-[ACYL-CARRIER-PROTEIN] REDUCTASE FABG"/>
    <property type="match status" value="1"/>
</dbReference>
<dbReference type="Pfam" id="PF13561">
    <property type="entry name" value="adh_short_C2"/>
    <property type="match status" value="1"/>
</dbReference>
<dbReference type="PRINTS" id="PR00081">
    <property type="entry name" value="GDHRDH"/>
</dbReference>
<dbReference type="PRINTS" id="PR00080">
    <property type="entry name" value="SDRFAMILY"/>
</dbReference>
<dbReference type="SUPFAM" id="SSF51735">
    <property type="entry name" value="NAD(P)-binding Rossmann-fold domains"/>
    <property type="match status" value="1"/>
</dbReference>
<dbReference type="PROSITE" id="PS00061">
    <property type="entry name" value="ADH_SHORT"/>
    <property type="match status" value="1"/>
</dbReference>
<accession>P0AET9</accession>
<accession>P25529</accession>
<organism>
    <name type="scientific">Escherichia coli O157:H7</name>
    <dbReference type="NCBI Taxonomy" id="83334"/>
    <lineage>
        <taxon>Bacteria</taxon>
        <taxon>Pseudomonadati</taxon>
        <taxon>Pseudomonadota</taxon>
        <taxon>Gammaproteobacteria</taxon>
        <taxon>Enterobacterales</taxon>
        <taxon>Enterobacteriaceae</taxon>
        <taxon>Escherichia</taxon>
    </lineage>
</organism>
<keyword id="KW-0088">Bile acid catabolism</keyword>
<keyword id="KW-0442">Lipid degradation</keyword>
<keyword id="KW-0443">Lipid metabolism</keyword>
<keyword id="KW-0520">NAD</keyword>
<keyword id="KW-0560">Oxidoreductase</keyword>
<keyword id="KW-1185">Reference proteome</keyword>
<keyword id="KW-0753">Steroid metabolism</keyword>
<proteinExistence type="inferred from homology"/>